<sequence>MGGFFSSIFSSLFGTREMRILILGLDGAGKTTILYRLQVGEVVTTIPTIGFNVETVTYKNLKFQVWDLGGQTSIRPYWRCYYSNTDAVIYVVDSCDRDRIGISKSELVAMLEEEELRKAILVVFANKQDMEQAMTPSEMANSLGLPALKDRKWQIFKTSATKGTGLDEAMEWLVETLKSRQ</sequence>
<protein>
    <recommendedName>
        <fullName>ADP-ribosylation factor-like protein 1</fullName>
    </recommendedName>
</protein>
<dbReference type="EMBL" id="BC110156">
    <property type="protein sequence ID" value="AAI10157.1"/>
    <property type="molecule type" value="mRNA"/>
</dbReference>
<dbReference type="RefSeq" id="NP_001039694.1">
    <property type="nucleotide sequence ID" value="NM_001046229.2"/>
</dbReference>
<dbReference type="SMR" id="Q2YDM1"/>
<dbReference type="FunCoup" id="Q2YDM1">
    <property type="interactions" value="3137"/>
</dbReference>
<dbReference type="STRING" id="9913.ENSBTAP00000015767"/>
<dbReference type="PaxDb" id="9913-ENSBTAP00000015767"/>
<dbReference type="Ensembl" id="ENSBTAT00000015767.4">
    <property type="protein sequence ID" value="ENSBTAP00000015767.3"/>
    <property type="gene ID" value="ENSBTAG00000011883.5"/>
</dbReference>
<dbReference type="GeneID" id="517345"/>
<dbReference type="KEGG" id="bta:517345"/>
<dbReference type="CTD" id="400"/>
<dbReference type="VEuPathDB" id="HostDB:ENSBTAG00000011883"/>
<dbReference type="VGNC" id="VGNC:26135">
    <property type="gene designation" value="ARL1"/>
</dbReference>
<dbReference type="eggNOG" id="KOG0072">
    <property type="taxonomic scope" value="Eukaryota"/>
</dbReference>
<dbReference type="GeneTree" id="ENSGT00940000155118"/>
<dbReference type="HOGENOM" id="CLU_040729_9_4_1"/>
<dbReference type="InParanoid" id="Q2YDM1"/>
<dbReference type="OMA" id="MGAGMSW"/>
<dbReference type="OrthoDB" id="2011769at2759"/>
<dbReference type="TreeFam" id="TF105461"/>
<dbReference type="Reactome" id="R-BTA-6811440">
    <property type="pathway name" value="Retrograde transport at the Trans-Golgi-Network"/>
</dbReference>
<dbReference type="Proteomes" id="UP000009136">
    <property type="component" value="Chromosome 5"/>
</dbReference>
<dbReference type="Bgee" id="ENSBTAG00000011883">
    <property type="expression patterns" value="Expressed in saliva-secreting gland and 108 other cell types or tissues"/>
</dbReference>
<dbReference type="GO" id="GO:0005737">
    <property type="term" value="C:cytoplasm"/>
    <property type="evidence" value="ECO:0000250"/>
    <property type="project" value="UniProtKB"/>
</dbReference>
<dbReference type="GO" id="GO:0005829">
    <property type="term" value="C:cytosol"/>
    <property type="evidence" value="ECO:0007669"/>
    <property type="project" value="GOC"/>
</dbReference>
<dbReference type="GO" id="GO:0005794">
    <property type="term" value="C:Golgi apparatus"/>
    <property type="evidence" value="ECO:0000250"/>
    <property type="project" value="UniProtKB"/>
</dbReference>
<dbReference type="GO" id="GO:0000139">
    <property type="term" value="C:Golgi membrane"/>
    <property type="evidence" value="ECO:0007669"/>
    <property type="project" value="UniProtKB-SubCell"/>
</dbReference>
<dbReference type="GO" id="GO:0005802">
    <property type="term" value="C:trans-Golgi network"/>
    <property type="evidence" value="ECO:0000250"/>
    <property type="project" value="UniProtKB"/>
</dbReference>
<dbReference type="GO" id="GO:0008047">
    <property type="term" value="F:enzyme activator activity"/>
    <property type="evidence" value="ECO:0000250"/>
    <property type="project" value="UniProtKB"/>
</dbReference>
<dbReference type="GO" id="GO:0005525">
    <property type="term" value="F:GTP binding"/>
    <property type="evidence" value="ECO:0000250"/>
    <property type="project" value="UniProtKB"/>
</dbReference>
<dbReference type="GO" id="GO:0003924">
    <property type="term" value="F:GTPase activity"/>
    <property type="evidence" value="ECO:0000250"/>
    <property type="project" value="UniProtKB"/>
</dbReference>
<dbReference type="GO" id="GO:0046872">
    <property type="term" value="F:metal ion binding"/>
    <property type="evidence" value="ECO:0007669"/>
    <property type="project" value="UniProtKB-KW"/>
</dbReference>
<dbReference type="GO" id="GO:1990583">
    <property type="term" value="F:phospholipase D activator activity"/>
    <property type="evidence" value="ECO:0000250"/>
    <property type="project" value="UniProtKB"/>
</dbReference>
<dbReference type="GO" id="GO:0007030">
    <property type="term" value="P:Golgi organization"/>
    <property type="evidence" value="ECO:0000250"/>
    <property type="project" value="UniProtKB"/>
</dbReference>
<dbReference type="GO" id="GO:0006886">
    <property type="term" value="P:intracellular protein transport"/>
    <property type="evidence" value="ECO:0000318"/>
    <property type="project" value="GO_Central"/>
</dbReference>
<dbReference type="GO" id="GO:0034067">
    <property type="term" value="P:protein localization to Golgi apparatus"/>
    <property type="evidence" value="ECO:0000250"/>
    <property type="project" value="UniProtKB"/>
</dbReference>
<dbReference type="GO" id="GO:0042147">
    <property type="term" value="P:retrograde transport, endosome to Golgi"/>
    <property type="evidence" value="ECO:0000250"/>
    <property type="project" value="UniProtKB"/>
</dbReference>
<dbReference type="GO" id="GO:0009404">
    <property type="term" value="P:toxin metabolic process"/>
    <property type="evidence" value="ECO:0000250"/>
    <property type="project" value="UniProtKB"/>
</dbReference>
<dbReference type="GO" id="GO:0016192">
    <property type="term" value="P:vesicle-mediated transport"/>
    <property type="evidence" value="ECO:0000318"/>
    <property type="project" value="GO_Central"/>
</dbReference>
<dbReference type="CDD" id="cd04151">
    <property type="entry name" value="Arl1"/>
    <property type="match status" value="1"/>
</dbReference>
<dbReference type="FunFam" id="3.40.50.300:FF:000306">
    <property type="entry name" value="ADP-ribosylation factor-like protein 1"/>
    <property type="match status" value="1"/>
</dbReference>
<dbReference type="Gene3D" id="3.40.50.300">
    <property type="entry name" value="P-loop containing nucleotide triphosphate hydrolases"/>
    <property type="match status" value="1"/>
</dbReference>
<dbReference type="InterPro" id="IPR027417">
    <property type="entry name" value="P-loop_NTPase"/>
</dbReference>
<dbReference type="InterPro" id="IPR005225">
    <property type="entry name" value="Small_GTP-bd"/>
</dbReference>
<dbReference type="InterPro" id="IPR024156">
    <property type="entry name" value="Small_GTPase_ARF"/>
</dbReference>
<dbReference type="InterPro" id="IPR006689">
    <property type="entry name" value="Small_GTPase_ARF/SAR"/>
</dbReference>
<dbReference type="NCBIfam" id="TIGR00231">
    <property type="entry name" value="small_GTP"/>
    <property type="match status" value="1"/>
</dbReference>
<dbReference type="PANTHER" id="PTHR11711">
    <property type="entry name" value="ADP RIBOSYLATION FACTOR-RELATED"/>
    <property type="match status" value="1"/>
</dbReference>
<dbReference type="Pfam" id="PF00025">
    <property type="entry name" value="Arf"/>
    <property type="match status" value="1"/>
</dbReference>
<dbReference type="PRINTS" id="PR00328">
    <property type="entry name" value="SAR1GTPBP"/>
</dbReference>
<dbReference type="SMART" id="SM00177">
    <property type="entry name" value="ARF"/>
    <property type="match status" value="1"/>
</dbReference>
<dbReference type="SMART" id="SM00175">
    <property type="entry name" value="RAB"/>
    <property type="match status" value="1"/>
</dbReference>
<dbReference type="SMART" id="SM00178">
    <property type="entry name" value="SAR"/>
    <property type="match status" value="1"/>
</dbReference>
<dbReference type="SUPFAM" id="SSF52540">
    <property type="entry name" value="P-loop containing nucleoside triphosphate hydrolases"/>
    <property type="match status" value="1"/>
</dbReference>
<dbReference type="PROSITE" id="PS51417">
    <property type="entry name" value="ARF"/>
    <property type="match status" value="1"/>
</dbReference>
<comment type="function">
    <text evidence="1">GTP-binding protein that recruits several effectors, such as golgins, arfaptins and Arf-GEFs to the trans-Golgi network, and modulates their functions at the Golgi complex. Plays thereby a role in a wide range of fundamental cellular processes, including cell polarity, innate immunity, or protein secretion mediated by arfaptins, which were shown to play a role in maintaining insulin secretion from pancreatic beta cells.</text>
</comment>
<comment type="subunit">
    <text evidence="1 2">The GTP-bound form interacts with GOLGA1 (By similarity). The GTP-bound form interacts with GOLGA4 and RGPD8. The GTP-bound form directly interacts with ARFIP2. Binds to SCOC, preferentially in its GTP-bound form. May interact with UNC119. Interacts with ARFIP1; this interaction directs ARFIP1 to the trans-Golgi membranes. Interacts with ARFGEF1 (via N-terminus).</text>
</comment>
<comment type="subcellular location">
    <subcellularLocation>
        <location evidence="1">Golgi apparatus membrane</location>
        <topology evidence="1">Peripheral membrane protein</topology>
        <orientation evidence="1">Cytoplasmic side</orientation>
    </subcellularLocation>
    <subcellularLocation>
        <location evidence="1">Golgi apparatus</location>
        <location evidence="1">trans-Golgi network membrane</location>
    </subcellularLocation>
    <subcellularLocation>
        <location evidence="1">Membrane</location>
        <topology evidence="1">Lipid-anchor</topology>
    </subcellularLocation>
</comment>
<comment type="similarity">
    <text evidence="3">Belongs to the small GTPase superfamily. Arf family.</text>
</comment>
<feature type="initiator methionine" description="Removed" evidence="1">
    <location>
        <position position="1"/>
    </location>
</feature>
<feature type="chain" id="PRO_0000245352" description="ADP-ribosylation factor-like protein 1">
    <location>
        <begin position="2"/>
        <end position="181"/>
    </location>
</feature>
<feature type="binding site" evidence="1">
    <location>
        <begin position="24"/>
        <end position="31"/>
    </location>
    <ligand>
        <name>GTP</name>
        <dbReference type="ChEBI" id="CHEBI:37565"/>
    </ligand>
</feature>
<feature type="binding site" evidence="1">
    <location>
        <position position="31"/>
    </location>
    <ligand>
        <name>Mg(2+)</name>
        <dbReference type="ChEBI" id="CHEBI:18420"/>
    </ligand>
</feature>
<feature type="binding site" evidence="1">
    <location>
        <begin position="45"/>
        <end position="48"/>
    </location>
    <ligand>
        <name>GTP</name>
        <dbReference type="ChEBI" id="CHEBI:37565"/>
    </ligand>
</feature>
<feature type="binding site" evidence="1">
    <location>
        <position position="48"/>
    </location>
    <ligand>
        <name>Mg(2+)</name>
        <dbReference type="ChEBI" id="CHEBI:18420"/>
    </ligand>
</feature>
<feature type="binding site" evidence="1">
    <location>
        <position position="70"/>
    </location>
    <ligand>
        <name>GTP</name>
        <dbReference type="ChEBI" id="CHEBI:37565"/>
    </ligand>
</feature>
<feature type="binding site" evidence="1">
    <location>
        <begin position="126"/>
        <end position="129"/>
    </location>
    <ligand>
        <name>GTP</name>
        <dbReference type="ChEBI" id="CHEBI:37565"/>
    </ligand>
</feature>
<feature type="binding site" evidence="1">
    <location>
        <begin position="160"/>
        <end position="161"/>
    </location>
    <ligand>
        <name>GTP</name>
        <dbReference type="ChEBI" id="CHEBI:37565"/>
    </ligand>
</feature>
<feature type="lipid moiety-binding region" description="N-myristoyl glycine" evidence="1">
    <location>
        <position position="2"/>
    </location>
</feature>
<organism>
    <name type="scientific">Bos taurus</name>
    <name type="common">Bovine</name>
    <dbReference type="NCBI Taxonomy" id="9913"/>
    <lineage>
        <taxon>Eukaryota</taxon>
        <taxon>Metazoa</taxon>
        <taxon>Chordata</taxon>
        <taxon>Craniata</taxon>
        <taxon>Vertebrata</taxon>
        <taxon>Euteleostomi</taxon>
        <taxon>Mammalia</taxon>
        <taxon>Eutheria</taxon>
        <taxon>Laurasiatheria</taxon>
        <taxon>Artiodactyla</taxon>
        <taxon>Ruminantia</taxon>
        <taxon>Pecora</taxon>
        <taxon>Bovidae</taxon>
        <taxon>Bovinae</taxon>
        <taxon>Bos</taxon>
    </lineage>
</organism>
<name>ARL1_BOVIN</name>
<gene>
    <name type="primary">ARL1</name>
</gene>
<accession>Q2YDM1</accession>
<keyword id="KW-0333">Golgi apparatus</keyword>
<keyword id="KW-0342">GTP-binding</keyword>
<keyword id="KW-0449">Lipoprotein</keyword>
<keyword id="KW-0460">Magnesium</keyword>
<keyword id="KW-0472">Membrane</keyword>
<keyword id="KW-0479">Metal-binding</keyword>
<keyword id="KW-0519">Myristate</keyword>
<keyword id="KW-0547">Nucleotide-binding</keyword>
<keyword id="KW-1185">Reference proteome</keyword>
<evidence type="ECO:0000250" key="1">
    <source>
        <dbReference type="UniProtKB" id="P40616"/>
    </source>
</evidence>
<evidence type="ECO:0000250" key="2">
    <source>
        <dbReference type="UniProtKB" id="P61212"/>
    </source>
</evidence>
<evidence type="ECO:0000305" key="3"/>
<proteinExistence type="evidence at transcript level"/>
<reference key="1">
    <citation type="submission" date="2005-11" db="EMBL/GenBank/DDBJ databases">
        <authorList>
            <consortium name="NIH - Mammalian Gene Collection (MGC) project"/>
        </authorList>
    </citation>
    <scope>NUCLEOTIDE SEQUENCE [LARGE SCALE MRNA]</scope>
    <source>
        <strain>Crossbred X Angus</strain>
        <tissue>Liver</tissue>
    </source>
</reference>